<gene>
    <name evidence="1" type="primary">mdtH</name>
    <name type="ordered locus">STM1166</name>
</gene>
<keyword id="KW-0997">Cell inner membrane</keyword>
<keyword id="KW-1003">Cell membrane</keyword>
<keyword id="KW-0472">Membrane</keyword>
<keyword id="KW-1185">Reference proteome</keyword>
<keyword id="KW-0812">Transmembrane</keyword>
<keyword id="KW-1133">Transmembrane helix</keyword>
<keyword id="KW-0813">Transport</keyword>
<dbReference type="EMBL" id="AE006468">
    <property type="protein sequence ID" value="AAL20096.1"/>
    <property type="molecule type" value="Genomic_DNA"/>
</dbReference>
<dbReference type="RefSeq" id="WP_000092165.1">
    <property type="nucleotide sequence ID" value="NC_003197.2"/>
</dbReference>
<dbReference type="SMR" id="Q8ZQ19"/>
<dbReference type="STRING" id="99287.STM1166"/>
<dbReference type="PaxDb" id="99287-STM1166"/>
<dbReference type="KEGG" id="stm:STM1166"/>
<dbReference type="PATRIC" id="fig|99287.12.peg.1234"/>
<dbReference type="HOGENOM" id="CLU_001265_60_2_6"/>
<dbReference type="PhylomeDB" id="Q8ZQ19"/>
<dbReference type="BioCyc" id="SENT99287:STM1166-MONOMER"/>
<dbReference type="Proteomes" id="UP000001014">
    <property type="component" value="Chromosome"/>
</dbReference>
<dbReference type="GO" id="GO:0005886">
    <property type="term" value="C:plasma membrane"/>
    <property type="evidence" value="ECO:0000318"/>
    <property type="project" value="GO_Central"/>
</dbReference>
<dbReference type="GO" id="GO:0022857">
    <property type="term" value="F:transmembrane transporter activity"/>
    <property type="evidence" value="ECO:0007669"/>
    <property type="project" value="UniProtKB-UniRule"/>
</dbReference>
<dbReference type="CDD" id="cd17329">
    <property type="entry name" value="MFS_MdtH_MDR_like"/>
    <property type="match status" value="1"/>
</dbReference>
<dbReference type="FunFam" id="1.20.1250.20:FF:000039">
    <property type="entry name" value="Multidrug resistance protein MdtH"/>
    <property type="match status" value="1"/>
</dbReference>
<dbReference type="Gene3D" id="1.20.1250.20">
    <property type="entry name" value="MFS general substrate transporter like domains"/>
    <property type="match status" value="1"/>
</dbReference>
<dbReference type="HAMAP" id="MF_01529">
    <property type="entry name" value="MFS_MdtH"/>
    <property type="match status" value="1"/>
</dbReference>
<dbReference type="InterPro" id="IPR011701">
    <property type="entry name" value="MFS"/>
</dbReference>
<dbReference type="InterPro" id="IPR020846">
    <property type="entry name" value="MFS_dom"/>
</dbReference>
<dbReference type="InterPro" id="IPR036259">
    <property type="entry name" value="MFS_trans_sf"/>
</dbReference>
<dbReference type="InterPro" id="IPR050171">
    <property type="entry name" value="MFS_Transporters"/>
</dbReference>
<dbReference type="InterPro" id="IPR022855">
    <property type="entry name" value="Multidrug-R_MdtH"/>
</dbReference>
<dbReference type="NCBIfam" id="NF008650">
    <property type="entry name" value="PRK11646.1"/>
    <property type="match status" value="1"/>
</dbReference>
<dbReference type="PANTHER" id="PTHR23517:SF2">
    <property type="entry name" value="MULTIDRUG RESISTANCE PROTEIN MDTH"/>
    <property type="match status" value="1"/>
</dbReference>
<dbReference type="PANTHER" id="PTHR23517">
    <property type="entry name" value="RESISTANCE PROTEIN MDTM, PUTATIVE-RELATED-RELATED"/>
    <property type="match status" value="1"/>
</dbReference>
<dbReference type="Pfam" id="PF07690">
    <property type="entry name" value="MFS_1"/>
    <property type="match status" value="1"/>
</dbReference>
<dbReference type="SUPFAM" id="SSF103473">
    <property type="entry name" value="MFS general substrate transporter"/>
    <property type="match status" value="1"/>
</dbReference>
<dbReference type="PROSITE" id="PS50850">
    <property type="entry name" value="MFS"/>
    <property type="match status" value="1"/>
</dbReference>
<organism>
    <name type="scientific">Salmonella typhimurium (strain LT2 / SGSC1412 / ATCC 700720)</name>
    <dbReference type="NCBI Taxonomy" id="99287"/>
    <lineage>
        <taxon>Bacteria</taxon>
        <taxon>Pseudomonadati</taxon>
        <taxon>Pseudomonadota</taxon>
        <taxon>Gammaproteobacteria</taxon>
        <taxon>Enterobacterales</taxon>
        <taxon>Enterobacteriaceae</taxon>
        <taxon>Salmonella</taxon>
    </lineage>
</organism>
<reference key="1">
    <citation type="journal article" date="2001" name="Nature">
        <title>Complete genome sequence of Salmonella enterica serovar Typhimurium LT2.</title>
        <authorList>
            <person name="McClelland M."/>
            <person name="Sanderson K.E."/>
            <person name="Spieth J."/>
            <person name="Clifton S.W."/>
            <person name="Latreille P."/>
            <person name="Courtney L."/>
            <person name="Porwollik S."/>
            <person name="Ali J."/>
            <person name="Dante M."/>
            <person name="Du F."/>
            <person name="Hou S."/>
            <person name="Layman D."/>
            <person name="Leonard S."/>
            <person name="Nguyen C."/>
            <person name="Scott K."/>
            <person name="Holmes A."/>
            <person name="Grewal N."/>
            <person name="Mulvaney E."/>
            <person name="Ryan E."/>
            <person name="Sun H."/>
            <person name="Florea L."/>
            <person name="Miller W."/>
            <person name="Stoneking T."/>
            <person name="Nhan M."/>
            <person name="Waterston R."/>
            <person name="Wilson R.K."/>
        </authorList>
    </citation>
    <scope>NUCLEOTIDE SEQUENCE [LARGE SCALE GENOMIC DNA]</scope>
    <source>
        <strain>LT2 / SGSC1412 / ATCC 700720</strain>
    </source>
</reference>
<evidence type="ECO:0000255" key="1">
    <source>
        <dbReference type="HAMAP-Rule" id="MF_01529"/>
    </source>
</evidence>
<accession>Q8ZQ19</accession>
<comment type="subcellular location">
    <subcellularLocation>
        <location evidence="1">Cell inner membrane</location>
        <topology evidence="1">Multi-pass membrane protein</topology>
    </subcellularLocation>
</comment>
<comment type="similarity">
    <text evidence="1">Belongs to the major facilitator superfamily. DHA1 family. MdtH (TC 2.A.1.2.21) subfamily.</text>
</comment>
<sequence length="402" mass="44442">MSRVSQARNLGKYFLLIDNMLVVLGFFVVFPLISIRFVDQMGWAAVMVGIALGLRQFIQQGLGIFGGAIADRFGAKPMIVTGMLMRAAGFATMGIAHEPWLLWFSCFLSGLGGTLFDPPRSALVVKLIRPEQRDRFFSLLMMQDSAGAVIGALLGSWLLQYDFRLVCATGAILFILCALFNAWLLPAWKLSTVRTPVREGMRRVMSDKRFVTYVLTLAGYYMLAVQVMLMLPIMVNDIAGSPAAVKWMYAIEACLSLTLLYPIARWSEKRFRLEHRLMAGLLVMSLSMLPIGMVGNLQQLFTLICAFYIGSVIAEPARETLSASLADARARGSYMGFSRLGLAIGGAIGYIGGGWLFDMGKALAQPELPWMMLGIIGFITFLALGWQFSHKRTPRRMLEPGA</sequence>
<protein>
    <recommendedName>
        <fullName evidence="1">Multidrug resistance protein MdtH</fullName>
    </recommendedName>
</protein>
<proteinExistence type="inferred from homology"/>
<feature type="chain" id="PRO_0000173350" description="Multidrug resistance protein MdtH">
    <location>
        <begin position="1"/>
        <end position="402"/>
    </location>
</feature>
<feature type="topological domain" description="Cytoplasmic" evidence="1">
    <location>
        <begin position="1"/>
        <end position="12"/>
    </location>
</feature>
<feature type="transmembrane region" description="Helical" evidence="1">
    <location>
        <begin position="13"/>
        <end position="33"/>
    </location>
</feature>
<feature type="topological domain" description="Periplasmic" evidence="1">
    <location>
        <begin position="34"/>
        <end position="98"/>
    </location>
</feature>
<feature type="transmembrane region" description="Helical" evidence="1">
    <location>
        <begin position="99"/>
        <end position="116"/>
    </location>
</feature>
<feature type="topological domain" description="Cytoplasmic" evidence="1">
    <location>
        <begin position="117"/>
        <end position="138"/>
    </location>
</feature>
<feature type="transmembrane region" description="Helical" evidence="1">
    <location>
        <begin position="139"/>
        <end position="159"/>
    </location>
</feature>
<feature type="topological domain" description="Periplasmic" evidence="1">
    <location>
        <begin position="160"/>
        <end position="164"/>
    </location>
</feature>
<feature type="transmembrane region" description="Helical" evidence="1">
    <location>
        <begin position="165"/>
        <end position="185"/>
    </location>
</feature>
<feature type="topological domain" description="Cytoplasmic" evidence="1">
    <location>
        <begin position="186"/>
        <end position="213"/>
    </location>
</feature>
<feature type="transmembrane region" description="Helical" evidence="1">
    <location>
        <begin position="214"/>
        <end position="234"/>
    </location>
</feature>
<feature type="topological domain" description="Periplasmic" evidence="1">
    <location>
        <begin position="235"/>
        <end position="243"/>
    </location>
</feature>
<feature type="transmembrane region" description="Helical" evidence="1">
    <location>
        <begin position="244"/>
        <end position="264"/>
    </location>
</feature>
<feature type="topological domain" description="Cytoplasmic" evidence="1">
    <location>
        <begin position="265"/>
        <end position="276"/>
    </location>
</feature>
<feature type="transmembrane region" description="Helical" evidence="1">
    <location>
        <begin position="277"/>
        <end position="297"/>
    </location>
</feature>
<feature type="topological domain" description="Periplasmic" evidence="1">
    <location>
        <begin position="298"/>
        <end position="299"/>
    </location>
</feature>
<feature type="transmembrane region" description="Helical" evidence="1">
    <location>
        <begin position="300"/>
        <end position="320"/>
    </location>
</feature>
<feature type="topological domain" description="Cytoplasmic" evidence="1">
    <location>
        <begin position="321"/>
        <end position="339"/>
    </location>
</feature>
<feature type="transmembrane region" description="Helical" evidence="1">
    <location>
        <begin position="340"/>
        <end position="360"/>
    </location>
</feature>
<feature type="topological domain" description="Periplasmic" evidence="1">
    <location>
        <begin position="361"/>
        <end position="367"/>
    </location>
</feature>
<feature type="transmembrane region" description="Helical" evidence="1">
    <location>
        <begin position="368"/>
        <end position="388"/>
    </location>
</feature>
<feature type="topological domain" description="Cytoplasmic" evidence="1">
    <location>
        <begin position="389"/>
        <end position="402"/>
    </location>
</feature>
<name>MDTH_SALTY</name>